<feature type="chain" id="PRO_0000250802" description="NAD(P)H-quinone oxidoreductase subunit I, chloroplastic">
    <location>
        <begin position="1"/>
        <end position="166"/>
    </location>
</feature>
<feature type="domain" description="4Fe-4S ferredoxin-type 1" evidence="1">
    <location>
        <begin position="55"/>
        <end position="84"/>
    </location>
</feature>
<feature type="domain" description="4Fe-4S ferredoxin-type 2" evidence="1">
    <location>
        <begin position="95"/>
        <end position="124"/>
    </location>
</feature>
<feature type="binding site" evidence="1">
    <location>
        <position position="64"/>
    </location>
    <ligand>
        <name>[4Fe-4S] cluster</name>
        <dbReference type="ChEBI" id="CHEBI:49883"/>
        <label>1</label>
    </ligand>
</feature>
<feature type="binding site" evidence="1">
    <location>
        <position position="67"/>
    </location>
    <ligand>
        <name>[4Fe-4S] cluster</name>
        <dbReference type="ChEBI" id="CHEBI:49883"/>
        <label>1</label>
    </ligand>
</feature>
<feature type="binding site" evidence="1">
    <location>
        <position position="70"/>
    </location>
    <ligand>
        <name>[4Fe-4S] cluster</name>
        <dbReference type="ChEBI" id="CHEBI:49883"/>
        <label>1</label>
    </ligand>
</feature>
<feature type="binding site" evidence="1">
    <location>
        <position position="74"/>
    </location>
    <ligand>
        <name>[4Fe-4S] cluster</name>
        <dbReference type="ChEBI" id="CHEBI:49883"/>
        <label>2</label>
    </ligand>
</feature>
<feature type="binding site" evidence="1">
    <location>
        <position position="104"/>
    </location>
    <ligand>
        <name>[4Fe-4S] cluster</name>
        <dbReference type="ChEBI" id="CHEBI:49883"/>
        <label>2</label>
    </ligand>
</feature>
<feature type="binding site" evidence="1">
    <location>
        <position position="107"/>
    </location>
    <ligand>
        <name>[4Fe-4S] cluster</name>
        <dbReference type="ChEBI" id="CHEBI:49883"/>
        <label>2</label>
    </ligand>
</feature>
<feature type="binding site" evidence="1">
    <location>
        <position position="110"/>
    </location>
    <ligand>
        <name>[4Fe-4S] cluster</name>
        <dbReference type="ChEBI" id="CHEBI:49883"/>
        <label>2</label>
    </ligand>
</feature>
<feature type="binding site" evidence="1">
    <location>
        <position position="114"/>
    </location>
    <ligand>
        <name>[4Fe-4S] cluster</name>
        <dbReference type="ChEBI" id="CHEBI:49883"/>
        <label>1</label>
    </ligand>
</feature>
<dbReference type="EC" id="7.1.1.-" evidence="1"/>
<dbReference type="EMBL" id="AF383802">
    <property type="protein sequence ID" value="AAN61743.1"/>
    <property type="molecule type" value="Genomic_DNA"/>
</dbReference>
<dbReference type="SMR" id="Q8HVR1"/>
<dbReference type="GO" id="GO:0009535">
    <property type="term" value="C:chloroplast thylakoid membrane"/>
    <property type="evidence" value="ECO:0007669"/>
    <property type="project" value="UniProtKB-SubCell"/>
</dbReference>
<dbReference type="GO" id="GO:0051539">
    <property type="term" value="F:4 iron, 4 sulfur cluster binding"/>
    <property type="evidence" value="ECO:0007669"/>
    <property type="project" value="UniProtKB-KW"/>
</dbReference>
<dbReference type="GO" id="GO:0005506">
    <property type="term" value="F:iron ion binding"/>
    <property type="evidence" value="ECO:0007669"/>
    <property type="project" value="UniProtKB-UniRule"/>
</dbReference>
<dbReference type="GO" id="GO:0008137">
    <property type="term" value="F:NADH dehydrogenase (ubiquinone) activity"/>
    <property type="evidence" value="ECO:0007669"/>
    <property type="project" value="InterPro"/>
</dbReference>
<dbReference type="GO" id="GO:0048038">
    <property type="term" value="F:quinone binding"/>
    <property type="evidence" value="ECO:0007669"/>
    <property type="project" value="UniProtKB-KW"/>
</dbReference>
<dbReference type="GO" id="GO:0019684">
    <property type="term" value="P:photosynthesis, light reaction"/>
    <property type="evidence" value="ECO:0007669"/>
    <property type="project" value="UniProtKB-UniRule"/>
</dbReference>
<dbReference type="FunFam" id="3.30.70.3270:FF:000006">
    <property type="entry name" value="NAD(P)H-quinone oxidoreductase subunit I, chloroplastic"/>
    <property type="match status" value="1"/>
</dbReference>
<dbReference type="Gene3D" id="3.30.70.3270">
    <property type="match status" value="1"/>
</dbReference>
<dbReference type="HAMAP" id="MF_01351">
    <property type="entry name" value="NDH1_NuoI"/>
    <property type="match status" value="1"/>
</dbReference>
<dbReference type="InterPro" id="IPR017896">
    <property type="entry name" value="4Fe4S_Fe-S-bd"/>
</dbReference>
<dbReference type="InterPro" id="IPR017900">
    <property type="entry name" value="4Fe4S_Fe_S_CS"/>
</dbReference>
<dbReference type="InterPro" id="IPR010226">
    <property type="entry name" value="NADH_quinone_OxRdtase_chainI"/>
</dbReference>
<dbReference type="InterPro" id="IPR004497">
    <property type="entry name" value="NDHI"/>
</dbReference>
<dbReference type="NCBIfam" id="TIGR00403">
    <property type="entry name" value="ndhI"/>
    <property type="match status" value="1"/>
</dbReference>
<dbReference type="NCBIfam" id="TIGR01971">
    <property type="entry name" value="NuoI"/>
    <property type="match status" value="1"/>
</dbReference>
<dbReference type="NCBIfam" id="NF004537">
    <property type="entry name" value="PRK05888.1-3"/>
    <property type="match status" value="1"/>
</dbReference>
<dbReference type="PANTHER" id="PTHR47275">
    <property type="entry name" value="NAD(P)H-QUINONE OXIDOREDUCTASE SUBUNIT I, CHLOROPLASTIC"/>
    <property type="match status" value="1"/>
</dbReference>
<dbReference type="PANTHER" id="PTHR47275:SF1">
    <property type="entry name" value="NAD(P)H-QUINONE OXIDOREDUCTASE SUBUNIT I, CHLOROPLASTIC"/>
    <property type="match status" value="1"/>
</dbReference>
<dbReference type="Pfam" id="PF00037">
    <property type="entry name" value="Fer4"/>
    <property type="match status" value="2"/>
</dbReference>
<dbReference type="SUPFAM" id="SSF54862">
    <property type="entry name" value="4Fe-4S ferredoxins"/>
    <property type="match status" value="1"/>
</dbReference>
<dbReference type="PROSITE" id="PS00198">
    <property type="entry name" value="4FE4S_FER_1"/>
    <property type="match status" value="2"/>
</dbReference>
<dbReference type="PROSITE" id="PS51379">
    <property type="entry name" value="4FE4S_FER_2"/>
    <property type="match status" value="2"/>
</dbReference>
<keyword id="KW-0004">4Fe-4S</keyword>
<keyword id="KW-0150">Chloroplast</keyword>
<keyword id="KW-0408">Iron</keyword>
<keyword id="KW-0411">Iron-sulfur</keyword>
<keyword id="KW-0472">Membrane</keyword>
<keyword id="KW-0479">Metal-binding</keyword>
<keyword id="KW-0520">NAD</keyword>
<keyword id="KW-0521">NADP</keyword>
<keyword id="KW-0934">Plastid</keyword>
<keyword id="KW-0618">Plastoquinone</keyword>
<keyword id="KW-0874">Quinone</keyword>
<keyword id="KW-0677">Repeat</keyword>
<keyword id="KW-0793">Thylakoid</keyword>
<keyword id="KW-1278">Translocase</keyword>
<protein>
    <recommendedName>
        <fullName evidence="1">NAD(P)H-quinone oxidoreductase subunit I, chloroplastic</fullName>
        <ecNumber evidence="1">7.1.1.-</ecNumber>
    </recommendedName>
    <alternativeName>
        <fullName evidence="1">NAD(P)H dehydrogenase subunit I</fullName>
        <shortName evidence="1">NDH subunit I</shortName>
    </alternativeName>
    <alternativeName>
        <fullName evidence="1">NADH-plastoquinone oxidoreductase subunit I</fullName>
    </alternativeName>
</protein>
<gene>
    <name evidence="1" type="primary">ndhI</name>
</gene>
<proteinExistence type="inferred from homology"/>
<name>NDHI_IDIQU</name>
<geneLocation type="chloroplast"/>
<organism>
    <name type="scientific">Idiopappus quitensis</name>
    <dbReference type="NCBI Taxonomy" id="166980"/>
    <lineage>
        <taxon>Eukaryota</taxon>
        <taxon>Viridiplantae</taxon>
        <taxon>Streptophyta</taxon>
        <taxon>Embryophyta</taxon>
        <taxon>Tracheophyta</taxon>
        <taxon>Spermatophyta</taxon>
        <taxon>Magnoliopsida</taxon>
        <taxon>eudicotyledons</taxon>
        <taxon>Gunneridae</taxon>
        <taxon>Pentapetalae</taxon>
        <taxon>asterids</taxon>
        <taxon>campanulids</taxon>
        <taxon>Asterales</taxon>
        <taxon>Asteraceae</taxon>
        <taxon>Asteroideae</taxon>
        <taxon>Heliantheae alliance</taxon>
        <taxon>Heliantheae</taxon>
        <taxon>Idiopappus</taxon>
    </lineage>
</organism>
<sequence length="166" mass="19475">MFPMVTEFMNYGQQTVRAARYIGQGFMITLSHANRLPVTIQYPYEKLITSERFRGRIHFEFDKCIACEVCVRVCPIDLPVVDWKLETDIRKKRLLNYSIDFGICIFCGNCVEYCPTNCLSMTEEYELSTYDRHELNYNQIALGRLPMSIIDDYTIRTILNLPEIKT</sequence>
<evidence type="ECO:0000255" key="1">
    <source>
        <dbReference type="HAMAP-Rule" id="MF_01351"/>
    </source>
</evidence>
<accession>Q8HVR1</accession>
<reference key="1">
    <citation type="submission" date="2003-01" db="EMBL/GenBank/DDBJ databases">
        <title>Chloroplast DNA phylogeny of tribe Heliantheae (Asteraceae).</title>
        <authorList>
            <person name="Panero J.L."/>
            <person name="Baldwin B.G."/>
            <person name="Schilling E.E."/>
            <person name="Clevinger J.A."/>
        </authorList>
    </citation>
    <scope>NUCLEOTIDE SEQUENCE [GENOMIC DNA]</scope>
</reference>
<comment type="function">
    <text evidence="1">NDH shuttles electrons from NAD(P)H:plastoquinone, via FMN and iron-sulfur (Fe-S) centers, to quinones in the photosynthetic chain and possibly in a chloroplast respiratory chain. The immediate electron acceptor for the enzyme in this species is believed to be plastoquinone. Couples the redox reaction to proton translocation, and thus conserves the redox energy in a proton gradient.</text>
</comment>
<comment type="catalytic activity">
    <reaction evidence="1">
        <text>a plastoquinone + NADH + (n+1) H(+)(in) = a plastoquinol + NAD(+) + n H(+)(out)</text>
        <dbReference type="Rhea" id="RHEA:42608"/>
        <dbReference type="Rhea" id="RHEA-COMP:9561"/>
        <dbReference type="Rhea" id="RHEA-COMP:9562"/>
        <dbReference type="ChEBI" id="CHEBI:15378"/>
        <dbReference type="ChEBI" id="CHEBI:17757"/>
        <dbReference type="ChEBI" id="CHEBI:57540"/>
        <dbReference type="ChEBI" id="CHEBI:57945"/>
        <dbReference type="ChEBI" id="CHEBI:62192"/>
    </reaction>
</comment>
<comment type="catalytic activity">
    <reaction evidence="1">
        <text>a plastoquinone + NADPH + (n+1) H(+)(in) = a plastoquinol + NADP(+) + n H(+)(out)</text>
        <dbReference type="Rhea" id="RHEA:42612"/>
        <dbReference type="Rhea" id="RHEA-COMP:9561"/>
        <dbReference type="Rhea" id="RHEA-COMP:9562"/>
        <dbReference type="ChEBI" id="CHEBI:15378"/>
        <dbReference type="ChEBI" id="CHEBI:17757"/>
        <dbReference type="ChEBI" id="CHEBI:57783"/>
        <dbReference type="ChEBI" id="CHEBI:58349"/>
        <dbReference type="ChEBI" id="CHEBI:62192"/>
    </reaction>
</comment>
<comment type="cofactor">
    <cofactor evidence="1">
        <name>[4Fe-4S] cluster</name>
        <dbReference type="ChEBI" id="CHEBI:49883"/>
    </cofactor>
    <text evidence="1">Binds 2 [4Fe-4S] clusters per subunit.</text>
</comment>
<comment type="subunit">
    <text evidence="1">NDH is composed of at least 16 different subunits, 5 of which are encoded in the nucleus.</text>
</comment>
<comment type="subcellular location">
    <subcellularLocation>
        <location evidence="1">Plastid</location>
        <location evidence="1">Chloroplast thylakoid membrane</location>
        <topology evidence="1">Peripheral membrane protein</topology>
    </subcellularLocation>
</comment>
<comment type="similarity">
    <text evidence="1">Belongs to the complex I 23 kDa subunit family.</text>
</comment>